<protein>
    <recommendedName>
        <fullName evidence="8">Carbamoyl phosphate synthase arginine-specific large chain, chloroplastic</fullName>
        <shortName>CPS</shortName>
        <shortName>CPSase</shortName>
        <ecNumber evidence="2">6.3.4.16</ecNumber>
        <ecNumber evidence="3">6.3.5.5</ecNumber>
    </recommendedName>
    <alternativeName>
        <fullName>Ammonium-dependent carbamoyl phosphate synthetase</fullName>
    </alternativeName>
    <alternativeName>
        <fullName>Arginine-specific carbamoyl phosphate synthetase, ammonia chain</fullName>
    </alternativeName>
    <alternativeName>
        <fullName>Glutamine-dependent carbamoyl phosphate synthetase</fullName>
    </alternativeName>
</protein>
<feature type="transit peptide" description="Chloroplast" evidence="4">
    <location>
        <begin position="1"/>
        <end position="50"/>
    </location>
</feature>
<feature type="chain" id="PRO_0000423077" description="Carbamoyl phosphate synthase arginine-specific large chain, chloroplastic">
    <location>
        <begin position="51"/>
        <end position="1172"/>
    </location>
</feature>
<feature type="domain" description="ATP-grasp 1" evidence="5">
    <location>
        <begin position="203"/>
        <end position="399"/>
    </location>
</feature>
<feature type="domain" description="ATP-grasp 2" evidence="5">
    <location>
        <begin position="761"/>
        <end position="954"/>
    </location>
</feature>
<feature type="domain" description="MGS-like" evidence="6">
    <location>
        <begin position="1021"/>
        <end position="1162"/>
    </location>
</feature>
<feature type="region of interest" description="Disordered" evidence="7">
    <location>
        <begin position="1"/>
        <end position="37"/>
    </location>
</feature>
<feature type="region of interest" description="Carboxyphosphate synthetic domain" evidence="1">
    <location>
        <begin position="72"/>
        <end position="473"/>
    </location>
</feature>
<feature type="region of interest" description="Oligomerization domain" evidence="1">
    <location>
        <begin position="474"/>
        <end position="623"/>
    </location>
</feature>
<feature type="region of interest" description="Carbamoyl phosphate synthetic domain" evidence="1">
    <location>
        <begin position="624"/>
        <end position="1019"/>
    </location>
</feature>
<feature type="region of interest" description="Allosteric domain" evidence="1">
    <location>
        <begin position="1020"/>
        <end position="1172"/>
    </location>
</feature>
<feature type="compositionally biased region" description="Polar residues" evidence="7">
    <location>
        <begin position="1"/>
        <end position="10"/>
    </location>
</feature>
<feature type="binding site" evidence="1">
    <location>
        <position position="199"/>
    </location>
    <ligand>
        <name>ATP</name>
        <dbReference type="ChEBI" id="CHEBI:30616"/>
        <label>1</label>
    </ligand>
</feature>
<feature type="binding site" evidence="1">
    <location>
        <position position="240"/>
    </location>
    <ligand>
        <name>ATP</name>
        <dbReference type="ChEBI" id="CHEBI:30616"/>
        <label>1</label>
    </ligand>
</feature>
<feature type="binding site" evidence="1">
    <location>
        <position position="246"/>
    </location>
    <ligand>
        <name>ATP</name>
        <dbReference type="ChEBI" id="CHEBI:30616"/>
        <label>1</label>
    </ligand>
</feature>
<feature type="binding site" evidence="1">
    <location>
        <position position="247"/>
    </location>
    <ligand>
        <name>ATP</name>
        <dbReference type="ChEBI" id="CHEBI:30616"/>
        <label>1</label>
    </ligand>
</feature>
<feature type="binding site" evidence="1">
    <location>
        <position position="279"/>
    </location>
    <ligand>
        <name>ATP</name>
        <dbReference type="ChEBI" id="CHEBI:30616"/>
        <label>1</label>
    </ligand>
</feature>
<feature type="binding site" evidence="1">
    <location>
        <position position="281"/>
    </location>
    <ligand>
        <name>ATP</name>
        <dbReference type="ChEBI" id="CHEBI:30616"/>
        <label>1</label>
    </ligand>
</feature>
<feature type="binding site" evidence="1">
    <location>
        <position position="286"/>
    </location>
    <ligand>
        <name>ATP</name>
        <dbReference type="ChEBI" id="CHEBI:30616"/>
        <label>1</label>
    </ligand>
</feature>
<feature type="binding site" evidence="1">
    <location>
        <position position="312"/>
    </location>
    <ligand>
        <name>ATP</name>
        <dbReference type="ChEBI" id="CHEBI:30616"/>
        <label>1</label>
    </ligand>
</feature>
<feature type="binding site" evidence="1">
    <location>
        <position position="313"/>
    </location>
    <ligand>
        <name>ATP</name>
        <dbReference type="ChEBI" id="CHEBI:30616"/>
        <label>1</label>
    </ligand>
</feature>
<feature type="binding site" evidence="1">
    <location>
        <position position="314"/>
    </location>
    <ligand>
        <name>ATP</name>
        <dbReference type="ChEBI" id="CHEBI:30616"/>
        <label>1</label>
    </ligand>
</feature>
<feature type="binding site" evidence="1">
    <location>
        <position position="356"/>
    </location>
    <ligand>
        <name>ATP</name>
        <dbReference type="ChEBI" id="CHEBI:30616"/>
        <label>1</label>
    </ligand>
</feature>
<feature type="binding site" evidence="5">
    <location>
        <position position="356"/>
    </location>
    <ligand>
        <name>Mg(2+)</name>
        <dbReference type="ChEBI" id="CHEBI:18420"/>
        <label>1</label>
    </ligand>
</feature>
<feature type="binding site" evidence="1">
    <location>
        <position position="370"/>
    </location>
    <ligand>
        <name>ATP</name>
        <dbReference type="ChEBI" id="CHEBI:30616"/>
        <label>1</label>
    </ligand>
</feature>
<feature type="binding site" evidence="5">
    <location>
        <position position="370"/>
    </location>
    <ligand>
        <name>Mg(2+)</name>
        <dbReference type="ChEBI" id="CHEBI:18420"/>
        <label>1</label>
    </ligand>
</feature>
<feature type="binding site" evidence="5">
    <location>
        <position position="370"/>
    </location>
    <ligand>
        <name>Mg(2+)</name>
        <dbReference type="ChEBI" id="CHEBI:18420"/>
        <label>2</label>
    </ligand>
</feature>
<feature type="binding site" evidence="5">
    <location>
        <position position="372"/>
    </location>
    <ligand>
        <name>Mg(2+)</name>
        <dbReference type="ChEBI" id="CHEBI:18420"/>
        <label>2</label>
    </ligand>
</feature>
<feature type="binding site" evidence="1">
    <location>
        <position position="797"/>
    </location>
    <ligand>
        <name>ATP</name>
        <dbReference type="ChEBI" id="CHEBI:30616"/>
        <label>2</label>
    </ligand>
</feature>
<feature type="binding site" evidence="1">
    <location>
        <position position="836"/>
    </location>
    <ligand>
        <name>ATP</name>
        <dbReference type="ChEBI" id="CHEBI:30616"/>
        <label>2</label>
    </ligand>
</feature>
<feature type="binding site" evidence="1">
    <location>
        <position position="838"/>
    </location>
    <ligand>
        <name>ATP</name>
        <dbReference type="ChEBI" id="CHEBI:30616"/>
        <label>2</label>
    </ligand>
</feature>
<feature type="binding site" evidence="1">
    <location>
        <position position="843"/>
    </location>
    <ligand>
        <name>ATP</name>
        <dbReference type="ChEBI" id="CHEBI:30616"/>
        <label>2</label>
    </ligand>
</feature>
<feature type="binding site" evidence="1">
    <location>
        <position position="869"/>
    </location>
    <ligand>
        <name>ATP</name>
        <dbReference type="ChEBI" id="CHEBI:30616"/>
        <label>2</label>
    </ligand>
</feature>
<feature type="binding site" evidence="1">
    <location>
        <position position="870"/>
    </location>
    <ligand>
        <name>ATP</name>
        <dbReference type="ChEBI" id="CHEBI:30616"/>
        <label>2</label>
    </ligand>
</feature>
<feature type="binding site" evidence="1">
    <location>
        <position position="871"/>
    </location>
    <ligand>
        <name>ATP</name>
        <dbReference type="ChEBI" id="CHEBI:30616"/>
        <label>2</label>
    </ligand>
</feature>
<feature type="binding site" evidence="1">
    <location>
        <position position="872"/>
    </location>
    <ligand>
        <name>ATP</name>
        <dbReference type="ChEBI" id="CHEBI:30616"/>
        <label>2</label>
    </ligand>
</feature>
<feature type="binding site" evidence="1">
    <location>
        <position position="912"/>
    </location>
    <ligand>
        <name>ATP</name>
        <dbReference type="ChEBI" id="CHEBI:30616"/>
        <label>2</label>
    </ligand>
</feature>
<feature type="binding site" evidence="5">
    <location>
        <position position="912"/>
    </location>
    <ligand>
        <name>Mg(2+)</name>
        <dbReference type="ChEBI" id="CHEBI:18420"/>
        <label>3</label>
    </ligand>
</feature>
<feature type="binding site" evidence="1">
    <location>
        <position position="925"/>
    </location>
    <ligand>
        <name>ATP</name>
        <dbReference type="ChEBI" id="CHEBI:30616"/>
        <label>2</label>
    </ligand>
</feature>
<feature type="binding site" evidence="5">
    <location>
        <position position="925"/>
    </location>
    <ligand>
        <name>Mg(2+)</name>
        <dbReference type="ChEBI" id="CHEBI:18420"/>
        <label>3</label>
    </ligand>
</feature>
<feature type="binding site" evidence="5">
    <location>
        <position position="925"/>
    </location>
    <ligand>
        <name>Mg(2+)</name>
        <dbReference type="ChEBI" id="CHEBI:18420"/>
        <label>4</label>
    </ligand>
</feature>
<feature type="binding site" evidence="5">
    <location>
        <position position="927"/>
    </location>
    <ligand>
        <name>Mg(2+)</name>
        <dbReference type="ChEBI" id="CHEBI:18420"/>
        <label>4</label>
    </ligand>
</feature>
<proteinExistence type="evidence at transcript level"/>
<gene>
    <name type="primary">CARB</name>
    <name type="ordered locus">Os01g0570700</name>
    <name type="ordered locus">LOC_Os01g38970</name>
    <name type="ORF">OsJ_02282</name>
</gene>
<name>CARB_ORYSJ</name>
<accession>B9EXM2</accession>
<accession>Q0JLU1</accession>
<dbReference type="EC" id="6.3.4.16" evidence="2"/>
<dbReference type="EC" id="6.3.5.5" evidence="3"/>
<dbReference type="EMBL" id="AP003334">
    <property type="status" value="NOT_ANNOTATED_CDS"/>
    <property type="molecule type" value="Genomic_DNA"/>
</dbReference>
<dbReference type="EMBL" id="AP008207">
    <property type="protein sequence ID" value="BAF05287.1"/>
    <property type="status" value="ALT_SEQ"/>
    <property type="molecule type" value="Genomic_DNA"/>
</dbReference>
<dbReference type="EMBL" id="AP014957">
    <property type="status" value="NOT_ANNOTATED_CDS"/>
    <property type="molecule type" value="Genomic_DNA"/>
</dbReference>
<dbReference type="EMBL" id="CM000138">
    <property type="protein sequence ID" value="EEE54835.1"/>
    <property type="molecule type" value="Genomic_DNA"/>
</dbReference>
<dbReference type="EMBL" id="AK061023">
    <property type="status" value="NOT_ANNOTATED_CDS"/>
    <property type="molecule type" value="mRNA"/>
</dbReference>
<dbReference type="RefSeq" id="XP_015617454.1">
    <property type="nucleotide sequence ID" value="XM_015761968.1"/>
</dbReference>
<dbReference type="SMR" id="B9EXM2"/>
<dbReference type="FunCoup" id="B9EXM2">
    <property type="interactions" value="2330"/>
</dbReference>
<dbReference type="STRING" id="39947.B9EXM2"/>
<dbReference type="PaxDb" id="39947-B9EXM2"/>
<dbReference type="KEGG" id="dosa:Os01g0570700"/>
<dbReference type="eggNOG" id="KOG0370">
    <property type="taxonomic scope" value="Eukaryota"/>
</dbReference>
<dbReference type="HOGENOM" id="CLU_000513_3_4_1"/>
<dbReference type="InParanoid" id="B9EXM2"/>
<dbReference type="OrthoDB" id="434at2759"/>
<dbReference type="PlantReactome" id="R-OSA-1119263">
    <property type="pathway name" value="Arginine biosynthesis"/>
</dbReference>
<dbReference type="PlantReactome" id="R-OSA-1119622">
    <property type="pathway name" value="Arginine biosynthesis II (acetyl cycle)"/>
</dbReference>
<dbReference type="UniPathway" id="UPA00068">
    <property type="reaction ID" value="UER00171"/>
</dbReference>
<dbReference type="Proteomes" id="UP000000763">
    <property type="component" value="Chromosome 1"/>
</dbReference>
<dbReference type="Proteomes" id="UP000007752">
    <property type="component" value="Chromosome 1"/>
</dbReference>
<dbReference type="Proteomes" id="UP000059680">
    <property type="component" value="Chromosome 1"/>
</dbReference>
<dbReference type="GO" id="GO:0009507">
    <property type="term" value="C:chloroplast"/>
    <property type="evidence" value="ECO:0007669"/>
    <property type="project" value="UniProtKB-SubCell"/>
</dbReference>
<dbReference type="GO" id="GO:0005737">
    <property type="term" value="C:cytoplasm"/>
    <property type="evidence" value="ECO:0000318"/>
    <property type="project" value="GO_Central"/>
</dbReference>
<dbReference type="GO" id="GO:0005524">
    <property type="term" value="F:ATP binding"/>
    <property type="evidence" value="ECO:0007669"/>
    <property type="project" value="UniProtKB-KW"/>
</dbReference>
<dbReference type="GO" id="GO:0004087">
    <property type="term" value="F:carbamoyl-phosphate synthase (ammonia) activity"/>
    <property type="evidence" value="ECO:0000318"/>
    <property type="project" value="GO_Central"/>
</dbReference>
<dbReference type="GO" id="GO:0004088">
    <property type="term" value="F:carbamoyl-phosphate synthase (glutamine-hydrolyzing) activity"/>
    <property type="evidence" value="ECO:0007669"/>
    <property type="project" value="UniProtKB-EC"/>
</dbReference>
<dbReference type="GO" id="GO:0046872">
    <property type="term" value="F:metal ion binding"/>
    <property type="evidence" value="ECO:0007669"/>
    <property type="project" value="UniProtKB-KW"/>
</dbReference>
<dbReference type="GO" id="GO:0006541">
    <property type="term" value="P:glutamine metabolic process"/>
    <property type="evidence" value="ECO:0000318"/>
    <property type="project" value="GO_Central"/>
</dbReference>
<dbReference type="GO" id="GO:0006526">
    <property type="term" value="P:L-arginine biosynthetic process"/>
    <property type="evidence" value="ECO:0007669"/>
    <property type="project" value="UniProtKB-UniPathway"/>
</dbReference>
<dbReference type="GO" id="GO:0006221">
    <property type="term" value="P:pyrimidine nucleotide biosynthetic process"/>
    <property type="evidence" value="ECO:0007669"/>
    <property type="project" value="UniProtKB-KW"/>
</dbReference>
<dbReference type="CDD" id="cd01424">
    <property type="entry name" value="MGS_CPS_II"/>
    <property type="match status" value="1"/>
</dbReference>
<dbReference type="FunFam" id="1.10.1030.10:FF:000002">
    <property type="entry name" value="Carbamoyl-phosphate synthase large chain"/>
    <property type="match status" value="1"/>
</dbReference>
<dbReference type="FunFam" id="3.30.1490.20:FF:000001">
    <property type="entry name" value="Carbamoyl-phosphate synthase large chain"/>
    <property type="match status" value="1"/>
</dbReference>
<dbReference type="FunFam" id="3.30.470.20:FF:000007">
    <property type="entry name" value="Carbamoyl-phosphate synthase large chain"/>
    <property type="match status" value="1"/>
</dbReference>
<dbReference type="FunFam" id="3.30.470.20:FF:000013">
    <property type="entry name" value="Carbamoyl-phosphate synthase large chain"/>
    <property type="match status" value="1"/>
</dbReference>
<dbReference type="FunFam" id="3.40.50.1380:FF:000013">
    <property type="entry name" value="Carbamoyl-phosphate synthase large chain"/>
    <property type="match status" value="1"/>
</dbReference>
<dbReference type="FunFam" id="3.40.50.20:FF:000001">
    <property type="entry name" value="Carbamoyl-phosphate synthase large chain"/>
    <property type="match status" value="1"/>
</dbReference>
<dbReference type="FunFam" id="3.40.50.20:FF:000003">
    <property type="entry name" value="Carbamoyl-phosphate synthase large chain"/>
    <property type="match status" value="1"/>
</dbReference>
<dbReference type="Gene3D" id="3.40.50.20">
    <property type="match status" value="2"/>
</dbReference>
<dbReference type="Gene3D" id="3.30.1490.20">
    <property type="entry name" value="ATP-grasp fold, A domain"/>
    <property type="match status" value="1"/>
</dbReference>
<dbReference type="Gene3D" id="3.30.470.20">
    <property type="entry name" value="ATP-grasp fold, B domain"/>
    <property type="match status" value="2"/>
</dbReference>
<dbReference type="Gene3D" id="1.10.1030.10">
    <property type="entry name" value="Carbamoyl-phosphate synthetase, large subunit oligomerisation domain"/>
    <property type="match status" value="1"/>
</dbReference>
<dbReference type="Gene3D" id="3.40.50.1380">
    <property type="entry name" value="Methylglyoxal synthase-like domain"/>
    <property type="match status" value="1"/>
</dbReference>
<dbReference type="HAMAP" id="MF_01210_A">
    <property type="entry name" value="CPSase_L_chain_A"/>
    <property type="match status" value="1"/>
</dbReference>
<dbReference type="HAMAP" id="MF_01210_B">
    <property type="entry name" value="CPSase_L_chain_B"/>
    <property type="match status" value="1"/>
</dbReference>
<dbReference type="InterPro" id="IPR011761">
    <property type="entry name" value="ATP-grasp"/>
</dbReference>
<dbReference type="InterPro" id="IPR013815">
    <property type="entry name" value="ATP_grasp_subdomain_1"/>
</dbReference>
<dbReference type="InterPro" id="IPR006275">
    <property type="entry name" value="CarbamoylP_synth_lsu"/>
</dbReference>
<dbReference type="InterPro" id="IPR005480">
    <property type="entry name" value="CarbamoylP_synth_lsu_oligo"/>
</dbReference>
<dbReference type="InterPro" id="IPR036897">
    <property type="entry name" value="CarbamoylP_synth_lsu_oligo_sf"/>
</dbReference>
<dbReference type="InterPro" id="IPR005479">
    <property type="entry name" value="CbamoylP_synth_lsu-like_ATP-bd"/>
</dbReference>
<dbReference type="InterPro" id="IPR005483">
    <property type="entry name" value="CbamoylP_synth_lsu_CPSase_dom"/>
</dbReference>
<dbReference type="InterPro" id="IPR011607">
    <property type="entry name" value="MGS-like_dom"/>
</dbReference>
<dbReference type="InterPro" id="IPR036914">
    <property type="entry name" value="MGS-like_dom_sf"/>
</dbReference>
<dbReference type="InterPro" id="IPR033937">
    <property type="entry name" value="MGS_CPS_CarB"/>
</dbReference>
<dbReference type="InterPro" id="IPR016185">
    <property type="entry name" value="PreATP-grasp_dom_sf"/>
</dbReference>
<dbReference type="NCBIfam" id="TIGR01369">
    <property type="entry name" value="CPSaseII_lrg"/>
    <property type="match status" value="1"/>
</dbReference>
<dbReference type="NCBIfam" id="NF003671">
    <property type="entry name" value="PRK05294.1"/>
    <property type="match status" value="1"/>
</dbReference>
<dbReference type="NCBIfam" id="NF009455">
    <property type="entry name" value="PRK12815.1"/>
    <property type="match status" value="1"/>
</dbReference>
<dbReference type="PANTHER" id="PTHR11405:SF53">
    <property type="entry name" value="CARBAMOYL-PHOSPHATE SYNTHASE [AMMONIA], MITOCHONDRIAL"/>
    <property type="match status" value="1"/>
</dbReference>
<dbReference type="PANTHER" id="PTHR11405">
    <property type="entry name" value="CARBAMOYLTRANSFERASE FAMILY MEMBER"/>
    <property type="match status" value="1"/>
</dbReference>
<dbReference type="Pfam" id="PF02786">
    <property type="entry name" value="CPSase_L_D2"/>
    <property type="match status" value="2"/>
</dbReference>
<dbReference type="Pfam" id="PF02787">
    <property type="entry name" value="CPSase_L_D3"/>
    <property type="match status" value="1"/>
</dbReference>
<dbReference type="Pfam" id="PF02142">
    <property type="entry name" value="MGS"/>
    <property type="match status" value="1"/>
</dbReference>
<dbReference type="PRINTS" id="PR00098">
    <property type="entry name" value="CPSASE"/>
</dbReference>
<dbReference type="SMART" id="SM01096">
    <property type="entry name" value="CPSase_L_D3"/>
    <property type="match status" value="1"/>
</dbReference>
<dbReference type="SMART" id="SM00851">
    <property type="entry name" value="MGS"/>
    <property type="match status" value="1"/>
</dbReference>
<dbReference type="SUPFAM" id="SSF48108">
    <property type="entry name" value="Carbamoyl phosphate synthetase, large subunit connection domain"/>
    <property type="match status" value="1"/>
</dbReference>
<dbReference type="SUPFAM" id="SSF56059">
    <property type="entry name" value="Glutathione synthetase ATP-binding domain-like"/>
    <property type="match status" value="2"/>
</dbReference>
<dbReference type="SUPFAM" id="SSF52335">
    <property type="entry name" value="Methylglyoxal synthase-like"/>
    <property type="match status" value="1"/>
</dbReference>
<dbReference type="SUPFAM" id="SSF52440">
    <property type="entry name" value="PreATP-grasp domain"/>
    <property type="match status" value="2"/>
</dbReference>
<dbReference type="PROSITE" id="PS50975">
    <property type="entry name" value="ATP_GRASP"/>
    <property type="match status" value="2"/>
</dbReference>
<dbReference type="PROSITE" id="PS00866">
    <property type="entry name" value="CPSASE_1"/>
    <property type="match status" value="2"/>
</dbReference>
<dbReference type="PROSITE" id="PS00867">
    <property type="entry name" value="CPSASE_2"/>
    <property type="match status" value="2"/>
</dbReference>
<dbReference type="PROSITE" id="PS51855">
    <property type="entry name" value="MGS"/>
    <property type="match status" value="1"/>
</dbReference>
<comment type="function">
    <text evidence="3">Large subunit of the arginine-specific carbamoyl phosphate synthase (CPSase). CPSase catalyzes the formation of carbamoyl phosphate from the ammonia moiety of glutamine, hydrogencarbonate, and phosphate donated by ATP, constituting the first step of 2 biosynthetic pathways, one leading to arginine and/or urea and the other to pyrimidine nucleotides. The large subunit (synthetase) binds the substrates ammonia (free or transferred from glutamine from the small subunit), hydrogencarbonate and ATP and carries out an ATP-coupled ligase reaction, activating hydrogencarbonate by forming carboxy phosphate which reacts with ammonia to form carbamoyl phosphate.</text>
</comment>
<comment type="catalytic activity">
    <reaction evidence="3">
        <text>hydrogencarbonate + L-glutamine + 2 ATP + H2O = carbamoyl phosphate + L-glutamate + 2 ADP + phosphate + 2 H(+)</text>
        <dbReference type="Rhea" id="RHEA:18633"/>
        <dbReference type="ChEBI" id="CHEBI:15377"/>
        <dbReference type="ChEBI" id="CHEBI:15378"/>
        <dbReference type="ChEBI" id="CHEBI:17544"/>
        <dbReference type="ChEBI" id="CHEBI:29985"/>
        <dbReference type="ChEBI" id="CHEBI:30616"/>
        <dbReference type="ChEBI" id="CHEBI:43474"/>
        <dbReference type="ChEBI" id="CHEBI:58228"/>
        <dbReference type="ChEBI" id="CHEBI:58359"/>
        <dbReference type="ChEBI" id="CHEBI:456216"/>
        <dbReference type="EC" id="6.3.5.5"/>
    </reaction>
</comment>
<comment type="catalytic activity">
    <molecule>Carbamoyl phosphate synthase arginine-specific large chain, chloroplastic</molecule>
    <reaction evidence="2">
        <text>hydrogencarbonate + NH4(+) + 2 ATP = carbamoyl phosphate + 2 ADP + phosphate + 2 H(+)</text>
        <dbReference type="Rhea" id="RHEA:18029"/>
        <dbReference type="ChEBI" id="CHEBI:15378"/>
        <dbReference type="ChEBI" id="CHEBI:17544"/>
        <dbReference type="ChEBI" id="CHEBI:28938"/>
        <dbReference type="ChEBI" id="CHEBI:30616"/>
        <dbReference type="ChEBI" id="CHEBI:43474"/>
        <dbReference type="ChEBI" id="CHEBI:58228"/>
        <dbReference type="ChEBI" id="CHEBI:456216"/>
        <dbReference type="EC" id="6.3.4.16"/>
    </reaction>
</comment>
<comment type="cofactor">
    <cofactor evidence="5">
        <name>Mg(2+)</name>
        <dbReference type="ChEBI" id="CHEBI:18420"/>
    </cofactor>
    <cofactor evidence="5">
        <name>Mn(2+)</name>
        <dbReference type="ChEBI" id="CHEBI:29035"/>
    </cofactor>
    <text evidence="5">Binds 4 Mg(2+) or Mn(2+) ions per subunit.</text>
</comment>
<comment type="pathway">
    <text evidence="2">Amino-acid biosynthesis; L-arginine biosynthesis; carbamoyl phosphate from bicarbonate: step 1/1.</text>
</comment>
<comment type="subunit">
    <text evidence="2">Heterodimer composed of 2 chains; the small (or glutamine) chain promotes the hydrolysis of glutamine to ammonia, which is used by the large (or ammonia) chain to synthesize carbamoyl phosphate.</text>
</comment>
<comment type="subcellular location">
    <subcellularLocation>
        <location evidence="8">Plastid</location>
        <location evidence="8">Chloroplast</location>
    </subcellularLocation>
</comment>
<comment type="domain">
    <text evidence="1">The large subunit is composed of 2 ATP-grasp domains that are involved in binding the 2 ATP molecules needed for carbamoyl phosphate synthesis. The N-terminal ATP-grasp domain (referred to as the carboxyphosphate synthetic component) catalyzes the ATP-dependent phosphorylation of hydrogencarbonate to carboxyphosphate and the subsequent nucleophilic attack by ammonia to form a carbamate intermediate. The C-terminal ATP-grasp domain (referred to as the carbamoyl phosphate synthetic component) then catalyzes the phosphorylation of carbamate with the second ATP to form the end product carbamoyl phosphate. The reactive and unstable enzyme intermediates are sequentially channeled from one active site to the next through the interior of the protein over a distance of at least 96 A.</text>
</comment>
<comment type="domain">
    <text evidence="2">The C-terminal MGS-like domain is required for catalytic function.</text>
</comment>
<comment type="similarity">
    <text evidence="8">Belongs to the CarB family.</text>
</comment>
<comment type="sequence caution" evidence="8">
    <conflict type="erroneous gene model prediction">
        <sequence resource="EMBL-CDS" id="BAF05287"/>
    </conflict>
</comment>
<evidence type="ECO:0000250" key="1">
    <source>
        <dbReference type="UniProtKB" id="P00968"/>
    </source>
</evidence>
<evidence type="ECO:0000250" key="2">
    <source>
        <dbReference type="UniProtKB" id="P03965"/>
    </source>
</evidence>
<evidence type="ECO:0000250" key="3">
    <source>
        <dbReference type="UniProtKB" id="Q42601"/>
    </source>
</evidence>
<evidence type="ECO:0000255" key="4"/>
<evidence type="ECO:0000255" key="5">
    <source>
        <dbReference type="PROSITE-ProRule" id="PRU00409"/>
    </source>
</evidence>
<evidence type="ECO:0000255" key="6">
    <source>
        <dbReference type="PROSITE-ProRule" id="PRU01202"/>
    </source>
</evidence>
<evidence type="ECO:0000256" key="7">
    <source>
        <dbReference type="SAM" id="MobiDB-lite"/>
    </source>
</evidence>
<evidence type="ECO:0000305" key="8"/>
<sequence>MATSLSSAPTQLRPSPSPSHHRLLHRSSLLPFPRRHHHRRRRCGALSIARASASAKDGVTVRRFPAAPTEGGRLAGVRKIMILGAGPIVIGQACEFDYSGTQACKALAEEGYEVVLVNSNPATIMTDPDLAHRTYIGPMTPPLVERIIAAERPDALLPTMGGQTALNLAVSLADSGALDRLGVRLIGASLPAIRAAEDRQLFKQAMDRIGLKTPPSGIGTTLEECISIAEDIGEFPLIVRPAFTLGGTGGGIAYNRAEFEDICRAGLAASHTQQVLVEKSLLGWKEYELEVMRDMADNVVIICSIENIDPMGVHTGDSITVAPAQTLTDKEYQRLRDYSVAIIREIGVECGGSNVQFAVNPADGEVMVIEMNPRVSRSSALASKATGFPIAKMAAKLSVGYTLDQIPNDITKKTPASFEPSIDYVVTKIPRFAFEKFPGSEPVLTTQMKSVGEAMALGRTFQESFQKAVRSLETGFAGWGCAPIKELDWDWEKLKYSLRVPNPDRIHAIYAAFKKGMRIQDIHEISFIDKWFLTELKELVDVEQFLISRGLDQLSKDDFYQVKRRGFSDTQIAFATSSSETDVRLRRLALEVAPTYKRVDTCAAEFEANTPYMYSSYEYECESVPTNKKKVLILGGGPNRIGQGIEFDYCCCHASFALREAGYETIMMNSNPETVSTDYDTSDRLYFEPLTVEDVTNVIDLERPDGIIVQFGGQTPLKLALPIQQYLEDKKLVSASGTGLVKIWGTSPDSIDAAEDRKRFNAILEELGIEQPKGGIARSESDALSIASEVGYPVVVRPSYVLGGRAMEIVYNDEKLIKYLATAVQVDPERPVLVDKYLIDAIEIDVDALADSVGNVVIGGIMEHIEQAGIHSGDSACSLPTRTVSAKCLDIIRSWTTKLAKRLNVCGLMNCQYAITTSGEVFLLEANPRASRTVPFVSKAIGHPLAKYASLVMSGVTLPELGYTQEVVPKHVSVKEAVLPFEKFQGCDILLGPEMRSTGEVMGIDYEFSGAFAKAQIAAGQKLPLNGTVFLSLNDLTKRHLAEIGRGFRELGFNIIATSGTAKVLQLEGIPVEPVLKIHEGRPNARDMLKNGQIQVMVITSSGDALDSKDGLQLRRLALAYKVPIITTVDGARATIDAIKSLKNKSIETLALQDYFQTTDASQNLQAAQSAS</sequence>
<organism>
    <name type="scientific">Oryza sativa subsp. japonica</name>
    <name type="common">Rice</name>
    <dbReference type="NCBI Taxonomy" id="39947"/>
    <lineage>
        <taxon>Eukaryota</taxon>
        <taxon>Viridiplantae</taxon>
        <taxon>Streptophyta</taxon>
        <taxon>Embryophyta</taxon>
        <taxon>Tracheophyta</taxon>
        <taxon>Spermatophyta</taxon>
        <taxon>Magnoliopsida</taxon>
        <taxon>Liliopsida</taxon>
        <taxon>Poales</taxon>
        <taxon>Poaceae</taxon>
        <taxon>BOP clade</taxon>
        <taxon>Oryzoideae</taxon>
        <taxon>Oryzeae</taxon>
        <taxon>Oryzinae</taxon>
        <taxon>Oryza</taxon>
        <taxon>Oryza sativa</taxon>
    </lineage>
</organism>
<keyword id="KW-0028">Amino-acid biosynthesis</keyword>
<keyword id="KW-0055">Arginine biosynthesis</keyword>
<keyword id="KW-0067">ATP-binding</keyword>
<keyword id="KW-0150">Chloroplast</keyword>
<keyword id="KW-0436">Ligase</keyword>
<keyword id="KW-0460">Magnesium</keyword>
<keyword id="KW-0464">Manganese</keyword>
<keyword id="KW-0479">Metal-binding</keyword>
<keyword id="KW-0547">Nucleotide-binding</keyword>
<keyword id="KW-0934">Plastid</keyword>
<keyword id="KW-0665">Pyrimidine biosynthesis</keyword>
<keyword id="KW-1185">Reference proteome</keyword>
<keyword id="KW-0677">Repeat</keyword>
<keyword id="KW-0809">Transit peptide</keyword>
<reference key="1">
    <citation type="journal article" date="2002" name="Nature">
        <title>The genome sequence and structure of rice chromosome 1.</title>
        <authorList>
            <person name="Sasaki T."/>
            <person name="Matsumoto T."/>
            <person name="Yamamoto K."/>
            <person name="Sakata K."/>
            <person name="Baba T."/>
            <person name="Katayose Y."/>
            <person name="Wu J."/>
            <person name="Niimura Y."/>
            <person name="Cheng Z."/>
            <person name="Nagamura Y."/>
            <person name="Antonio B.A."/>
            <person name="Kanamori H."/>
            <person name="Hosokawa S."/>
            <person name="Masukawa M."/>
            <person name="Arikawa K."/>
            <person name="Chiden Y."/>
            <person name="Hayashi M."/>
            <person name="Okamoto M."/>
            <person name="Ando T."/>
            <person name="Aoki H."/>
            <person name="Arita K."/>
            <person name="Hamada M."/>
            <person name="Harada C."/>
            <person name="Hijishita S."/>
            <person name="Honda M."/>
            <person name="Ichikawa Y."/>
            <person name="Idonuma A."/>
            <person name="Iijima M."/>
            <person name="Ikeda M."/>
            <person name="Ikeno M."/>
            <person name="Ito S."/>
            <person name="Ito T."/>
            <person name="Ito Y."/>
            <person name="Ito Y."/>
            <person name="Iwabuchi A."/>
            <person name="Kamiya K."/>
            <person name="Karasawa W."/>
            <person name="Katagiri S."/>
            <person name="Kikuta A."/>
            <person name="Kobayashi N."/>
            <person name="Kono I."/>
            <person name="Machita K."/>
            <person name="Maehara T."/>
            <person name="Mizuno H."/>
            <person name="Mizubayashi T."/>
            <person name="Mukai Y."/>
            <person name="Nagasaki H."/>
            <person name="Nakashima M."/>
            <person name="Nakama Y."/>
            <person name="Nakamichi Y."/>
            <person name="Nakamura M."/>
            <person name="Namiki N."/>
            <person name="Negishi M."/>
            <person name="Ohta I."/>
            <person name="Ono N."/>
            <person name="Saji S."/>
            <person name="Sakai K."/>
            <person name="Shibata M."/>
            <person name="Shimokawa T."/>
            <person name="Shomura A."/>
            <person name="Song J."/>
            <person name="Takazaki Y."/>
            <person name="Terasawa K."/>
            <person name="Tsuji K."/>
            <person name="Waki K."/>
            <person name="Yamagata H."/>
            <person name="Yamane H."/>
            <person name="Yoshiki S."/>
            <person name="Yoshihara R."/>
            <person name="Yukawa K."/>
            <person name="Zhong H."/>
            <person name="Iwama H."/>
            <person name="Endo T."/>
            <person name="Ito H."/>
            <person name="Hahn J.H."/>
            <person name="Kim H.-I."/>
            <person name="Eun M.-Y."/>
            <person name="Yano M."/>
            <person name="Jiang J."/>
            <person name="Gojobori T."/>
        </authorList>
    </citation>
    <scope>NUCLEOTIDE SEQUENCE [LARGE SCALE GENOMIC DNA]</scope>
    <source>
        <strain>cv. Nipponbare</strain>
    </source>
</reference>
<reference key="2">
    <citation type="journal article" date="2005" name="Nature">
        <title>The map-based sequence of the rice genome.</title>
        <authorList>
            <consortium name="International rice genome sequencing project (IRGSP)"/>
        </authorList>
    </citation>
    <scope>NUCLEOTIDE SEQUENCE [LARGE SCALE GENOMIC DNA]</scope>
    <source>
        <strain>cv. Nipponbare</strain>
    </source>
</reference>
<reference key="3">
    <citation type="journal article" date="2008" name="Nucleic Acids Res.">
        <title>The rice annotation project database (RAP-DB): 2008 update.</title>
        <authorList>
            <consortium name="The rice annotation project (RAP)"/>
        </authorList>
    </citation>
    <scope>GENOME REANNOTATION</scope>
    <source>
        <strain>cv. Nipponbare</strain>
    </source>
</reference>
<reference key="4">
    <citation type="journal article" date="2013" name="Rice">
        <title>Improvement of the Oryza sativa Nipponbare reference genome using next generation sequence and optical map data.</title>
        <authorList>
            <person name="Kawahara Y."/>
            <person name="de la Bastide M."/>
            <person name="Hamilton J.P."/>
            <person name="Kanamori H."/>
            <person name="McCombie W.R."/>
            <person name="Ouyang S."/>
            <person name="Schwartz D.C."/>
            <person name="Tanaka T."/>
            <person name="Wu J."/>
            <person name="Zhou S."/>
            <person name="Childs K.L."/>
            <person name="Davidson R.M."/>
            <person name="Lin H."/>
            <person name="Quesada-Ocampo L."/>
            <person name="Vaillancourt B."/>
            <person name="Sakai H."/>
            <person name="Lee S.S."/>
            <person name="Kim J."/>
            <person name="Numa H."/>
            <person name="Itoh T."/>
            <person name="Buell C.R."/>
            <person name="Matsumoto T."/>
        </authorList>
    </citation>
    <scope>GENOME REANNOTATION</scope>
    <source>
        <strain>cv. Nipponbare</strain>
    </source>
</reference>
<reference key="5">
    <citation type="journal article" date="2005" name="PLoS Biol.">
        <title>The genomes of Oryza sativa: a history of duplications.</title>
        <authorList>
            <person name="Yu J."/>
            <person name="Wang J."/>
            <person name="Lin W."/>
            <person name="Li S."/>
            <person name="Li H."/>
            <person name="Zhou J."/>
            <person name="Ni P."/>
            <person name="Dong W."/>
            <person name="Hu S."/>
            <person name="Zeng C."/>
            <person name="Zhang J."/>
            <person name="Zhang Y."/>
            <person name="Li R."/>
            <person name="Xu Z."/>
            <person name="Li S."/>
            <person name="Li X."/>
            <person name="Zheng H."/>
            <person name="Cong L."/>
            <person name="Lin L."/>
            <person name="Yin J."/>
            <person name="Geng J."/>
            <person name="Li G."/>
            <person name="Shi J."/>
            <person name="Liu J."/>
            <person name="Lv H."/>
            <person name="Li J."/>
            <person name="Wang J."/>
            <person name="Deng Y."/>
            <person name="Ran L."/>
            <person name="Shi X."/>
            <person name="Wang X."/>
            <person name="Wu Q."/>
            <person name="Li C."/>
            <person name="Ren X."/>
            <person name="Wang J."/>
            <person name="Wang X."/>
            <person name="Li D."/>
            <person name="Liu D."/>
            <person name="Zhang X."/>
            <person name="Ji Z."/>
            <person name="Zhao W."/>
            <person name="Sun Y."/>
            <person name="Zhang Z."/>
            <person name="Bao J."/>
            <person name="Han Y."/>
            <person name="Dong L."/>
            <person name="Ji J."/>
            <person name="Chen P."/>
            <person name="Wu S."/>
            <person name="Liu J."/>
            <person name="Xiao Y."/>
            <person name="Bu D."/>
            <person name="Tan J."/>
            <person name="Yang L."/>
            <person name="Ye C."/>
            <person name="Zhang J."/>
            <person name="Xu J."/>
            <person name="Zhou Y."/>
            <person name="Yu Y."/>
            <person name="Zhang B."/>
            <person name="Zhuang S."/>
            <person name="Wei H."/>
            <person name="Liu B."/>
            <person name="Lei M."/>
            <person name="Yu H."/>
            <person name="Li Y."/>
            <person name="Xu H."/>
            <person name="Wei S."/>
            <person name="He X."/>
            <person name="Fang L."/>
            <person name="Zhang Z."/>
            <person name="Zhang Y."/>
            <person name="Huang X."/>
            <person name="Su Z."/>
            <person name="Tong W."/>
            <person name="Li J."/>
            <person name="Tong Z."/>
            <person name="Li S."/>
            <person name="Ye J."/>
            <person name="Wang L."/>
            <person name="Fang L."/>
            <person name="Lei T."/>
            <person name="Chen C.-S."/>
            <person name="Chen H.-C."/>
            <person name="Xu Z."/>
            <person name="Li H."/>
            <person name="Huang H."/>
            <person name="Zhang F."/>
            <person name="Xu H."/>
            <person name="Li N."/>
            <person name="Zhao C."/>
            <person name="Li S."/>
            <person name="Dong L."/>
            <person name="Huang Y."/>
            <person name="Li L."/>
            <person name="Xi Y."/>
            <person name="Qi Q."/>
            <person name="Li W."/>
            <person name="Zhang B."/>
            <person name="Hu W."/>
            <person name="Zhang Y."/>
            <person name="Tian X."/>
            <person name="Jiao Y."/>
            <person name="Liang X."/>
            <person name="Jin J."/>
            <person name="Gao L."/>
            <person name="Zheng W."/>
            <person name="Hao B."/>
            <person name="Liu S.-M."/>
            <person name="Wang W."/>
            <person name="Yuan L."/>
            <person name="Cao M."/>
            <person name="McDermott J."/>
            <person name="Samudrala R."/>
            <person name="Wang J."/>
            <person name="Wong G.K.-S."/>
            <person name="Yang H."/>
        </authorList>
    </citation>
    <scope>NUCLEOTIDE SEQUENCE [LARGE SCALE GENOMIC DNA]</scope>
    <source>
        <strain>cv. Nipponbare</strain>
    </source>
</reference>
<reference key="6">
    <citation type="journal article" date="2003" name="Science">
        <title>Collection, mapping, and annotation of over 28,000 cDNA clones from japonica rice.</title>
        <authorList>
            <consortium name="The rice full-length cDNA consortium"/>
        </authorList>
    </citation>
    <scope>NUCLEOTIDE SEQUENCE [LARGE SCALE MRNA] OF 847-1172</scope>
    <source>
        <strain>cv. Nipponbare</strain>
    </source>
</reference>